<name>HIS6_SODGM</name>
<dbReference type="EC" id="4.3.2.10" evidence="1"/>
<dbReference type="EMBL" id="AP008232">
    <property type="protein sequence ID" value="BAE74399.1"/>
    <property type="molecule type" value="Genomic_DNA"/>
</dbReference>
<dbReference type="RefSeq" id="WP_011410959.1">
    <property type="nucleotide sequence ID" value="NC_007712.1"/>
</dbReference>
<dbReference type="SMR" id="Q2NTX6"/>
<dbReference type="STRING" id="343509.SG1124"/>
<dbReference type="KEGG" id="sgl:SG1124"/>
<dbReference type="eggNOG" id="COG0107">
    <property type="taxonomic scope" value="Bacteria"/>
</dbReference>
<dbReference type="HOGENOM" id="CLU_048577_4_0_6"/>
<dbReference type="OrthoDB" id="9781903at2"/>
<dbReference type="BioCyc" id="SGLO343509:SGP1_RS09645-MONOMER"/>
<dbReference type="UniPathway" id="UPA00031">
    <property type="reaction ID" value="UER00010"/>
</dbReference>
<dbReference type="Proteomes" id="UP000001932">
    <property type="component" value="Chromosome"/>
</dbReference>
<dbReference type="GO" id="GO:0005737">
    <property type="term" value="C:cytoplasm"/>
    <property type="evidence" value="ECO:0007669"/>
    <property type="project" value="UniProtKB-SubCell"/>
</dbReference>
<dbReference type="GO" id="GO:0000107">
    <property type="term" value="F:imidazoleglycerol-phosphate synthase activity"/>
    <property type="evidence" value="ECO:0007669"/>
    <property type="project" value="UniProtKB-UniRule"/>
</dbReference>
<dbReference type="GO" id="GO:0016829">
    <property type="term" value="F:lyase activity"/>
    <property type="evidence" value="ECO:0007669"/>
    <property type="project" value="UniProtKB-KW"/>
</dbReference>
<dbReference type="GO" id="GO:0000105">
    <property type="term" value="P:L-histidine biosynthetic process"/>
    <property type="evidence" value="ECO:0007669"/>
    <property type="project" value="UniProtKB-UniRule"/>
</dbReference>
<dbReference type="CDD" id="cd04731">
    <property type="entry name" value="HisF"/>
    <property type="match status" value="1"/>
</dbReference>
<dbReference type="FunFam" id="3.20.20.70:FF:000006">
    <property type="entry name" value="Imidazole glycerol phosphate synthase subunit HisF"/>
    <property type="match status" value="1"/>
</dbReference>
<dbReference type="Gene3D" id="3.20.20.70">
    <property type="entry name" value="Aldolase class I"/>
    <property type="match status" value="1"/>
</dbReference>
<dbReference type="HAMAP" id="MF_01013">
    <property type="entry name" value="HisF"/>
    <property type="match status" value="1"/>
</dbReference>
<dbReference type="InterPro" id="IPR013785">
    <property type="entry name" value="Aldolase_TIM"/>
</dbReference>
<dbReference type="InterPro" id="IPR006062">
    <property type="entry name" value="His_biosynth"/>
</dbReference>
<dbReference type="InterPro" id="IPR004651">
    <property type="entry name" value="HisF"/>
</dbReference>
<dbReference type="InterPro" id="IPR050064">
    <property type="entry name" value="IGPS_HisA/HisF"/>
</dbReference>
<dbReference type="InterPro" id="IPR011060">
    <property type="entry name" value="RibuloseP-bd_barrel"/>
</dbReference>
<dbReference type="NCBIfam" id="TIGR00735">
    <property type="entry name" value="hisF"/>
    <property type="match status" value="1"/>
</dbReference>
<dbReference type="PANTHER" id="PTHR21235:SF2">
    <property type="entry name" value="IMIDAZOLE GLYCEROL PHOSPHATE SYNTHASE HISHF"/>
    <property type="match status" value="1"/>
</dbReference>
<dbReference type="PANTHER" id="PTHR21235">
    <property type="entry name" value="IMIDAZOLE GLYCEROL PHOSPHATE SYNTHASE SUBUNIT HISF/H IGP SYNTHASE SUBUNIT HISF/H"/>
    <property type="match status" value="1"/>
</dbReference>
<dbReference type="Pfam" id="PF00977">
    <property type="entry name" value="His_biosynth"/>
    <property type="match status" value="1"/>
</dbReference>
<dbReference type="SUPFAM" id="SSF51366">
    <property type="entry name" value="Ribulose-phoshate binding barrel"/>
    <property type="match status" value="1"/>
</dbReference>
<comment type="function">
    <text evidence="1">IGPS catalyzes the conversion of PRFAR and glutamine to IGP, AICAR and glutamate. The HisF subunit catalyzes the cyclization activity that produces IGP and AICAR from PRFAR using the ammonia provided by the HisH subunit.</text>
</comment>
<comment type="catalytic activity">
    <reaction evidence="1">
        <text>5-[(5-phospho-1-deoxy-D-ribulos-1-ylimino)methylamino]-1-(5-phospho-beta-D-ribosyl)imidazole-4-carboxamide + L-glutamine = D-erythro-1-(imidazol-4-yl)glycerol 3-phosphate + 5-amino-1-(5-phospho-beta-D-ribosyl)imidazole-4-carboxamide + L-glutamate + H(+)</text>
        <dbReference type="Rhea" id="RHEA:24793"/>
        <dbReference type="ChEBI" id="CHEBI:15378"/>
        <dbReference type="ChEBI" id="CHEBI:29985"/>
        <dbReference type="ChEBI" id="CHEBI:58278"/>
        <dbReference type="ChEBI" id="CHEBI:58359"/>
        <dbReference type="ChEBI" id="CHEBI:58475"/>
        <dbReference type="ChEBI" id="CHEBI:58525"/>
        <dbReference type="EC" id="4.3.2.10"/>
    </reaction>
</comment>
<comment type="pathway">
    <text evidence="1">Amino-acid biosynthesis; L-histidine biosynthesis; L-histidine from 5-phospho-alpha-D-ribose 1-diphosphate: step 5/9.</text>
</comment>
<comment type="subunit">
    <text evidence="1">Heterodimer of HisH and HisF.</text>
</comment>
<comment type="subcellular location">
    <subcellularLocation>
        <location evidence="1">Cytoplasm</location>
    </subcellularLocation>
</comment>
<comment type="similarity">
    <text evidence="1">Belongs to the HisA/HisF family.</text>
</comment>
<organism>
    <name type="scientific">Sodalis glossinidius (strain morsitans)</name>
    <dbReference type="NCBI Taxonomy" id="343509"/>
    <lineage>
        <taxon>Bacteria</taxon>
        <taxon>Pseudomonadati</taxon>
        <taxon>Pseudomonadota</taxon>
        <taxon>Gammaproteobacteria</taxon>
        <taxon>Enterobacterales</taxon>
        <taxon>Bruguierivoracaceae</taxon>
        <taxon>Sodalis</taxon>
    </lineage>
</organism>
<protein>
    <recommendedName>
        <fullName evidence="1">Imidazole glycerol phosphate synthase subunit HisF</fullName>
        <ecNumber evidence="1">4.3.2.10</ecNumber>
    </recommendedName>
    <alternativeName>
        <fullName evidence="1">IGP synthase cyclase subunit</fullName>
    </alternativeName>
    <alternativeName>
        <fullName evidence="1">IGP synthase subunit HisF</fullName>
    </alternativeName>
    <alternativeName>
        <fullName evidence="1">ImGP synthase subunit HisF</fullName>
        <shortName evidence="1">IGPS subunit HisF</shortName>
    </alternativeName>
</protein>
<reference key="1">
    <citation type="journal article" date="2006" name="Genome Res.">
        <title>Massive genome erosion and functional adaptations provide insights into the symbiotic lifestyle of Sodalis glossinidius in the tsetse host.</title>
        <authorList>
            <person name="Toh H."/>
            <person name="Weiss B.L."/>
            <person name="Perkin S.A.H."/>
            <person name="Yamashita A."/>
            <person name="Oshima K."/>
            <person name="Hattori M."/>
            <person name="Aksoy S."/>
        </authorList>
    </citation>
    <scope>NUCLEOTIDE SEQUENCE [LARGE SCALE GENOMIC DNA]</scope>
    <source>
        <strain>morsitans</strain>
    </source>
</reference>
<sequence length="258" mass="28329">MLAKRIIPCLDVRQGQVVKGVQFRNHEIIGGIVPLVCRYAEEGADELVFYDITASADARVVDKRWIADVAEVIDIPFCVAGGIQSVAQAGEILSYGADKISINSPALADPTLISRLADRFGVQCIVVGIDTWFDAASGRYQVNQYTGDETRTHITPWQTLDWIEEVQRRGAGELVLNMMNQDGVRNGYDLMQLRQVRERCHVPLIASGGAGTMAHFLSAFRDAQVDGALAASVFHKQIINIGELKQFLAAEGVEIRLC</sequence>
<feature type="chain" id="PRO_1000063155" description="Imidazole glycerol phosphate synthase subunit HisF">
    <location>
        <begin position="1"/>
        <end position="258"/>
    </location>
</feature>
<feature type="active site" evidence="1">
    <location>
        <position position="11"/>
    </location>
</feature>
<feature type="active site" evidence="1">
    <location>
        <position position="130"/>
    </location>
</feature>
<gene>
    <name evidence="1" type="primary">hisF</name>
    <name type="ordered locus">SG1124</name>
</gene>
<proteinExistence type="inferred from homology"/>
<accession>Q2NTX6</accession>
<keyword id="KW-0028">Amino-acid biosynthesis</keyword>
<keyword id="KW-0963">Cytoplasm</keyword>
<keyword id="KW-0368">Histidine biosynthesis</keyword>
<keyword id="KW-0456">Lyase</keyword>
<evidence type="ECO:0000255" key="1">
    <source>
        <dbReference type="HAMAP-Rule" id="MF_01013"/>
    </source>
</evidence>